<accession>Q8FHF4</accession>
<reference key="1">
    <citation type="journal article" date="2002" name="Proc. Natl. Acad. Sci. U.S.A.">
        <title>Extensive mosaic structure revealed by the complete genome sequence of uropathogenic Escherichia coli.</title>
        <authorList>
            <person name="Welch R.A."/>
            <person name="Burland V."/>
            <person name="Plunkett G. III"/>
            <person name="Redford P."/>
            <person name="Roesch P."/>
            <person name="Rasko D."/>
            <person name="Buckles E.L."/>
            <person name="Liou S.-R."/>
            <person name="Boutin A."/>
            <person name="Hackett J."/>
            <person name="Stroud D."/>
            <person name="Mayhew G.F."/>
            <person name="Rose D.J."/>
            <person name="Zhou S."/>
            <person name="Schwartz D.C."/>
            <person name="Perna N.T."/>
            <person name="Mobley H.L.T."/>
            <person name="Donnenberg M.S."/>
            <person name="Blattner F.R."/>
        </authorList>
    </citation>
    <scope>NUCLEOTIDE SEQUENCE [LARGE SCALE GENOMIC DNA]</scope>
    <source>
        <strain>CFT073 / ATCC 700928 / UPEC</strain>
    </source>
</reference>
<reference key="2">
    <citation type="journal article" date="2012" name="PLoS Pathog.">
        <title>Toxin-antitoxin systems are important for niche-specific colonization and stress resistance of uropathogenic Escherichia coli.</title>
        <authorList>
            <person name="Norton J.P."/>
            <person name="Mulvey M.A."/>
        </authorList>
    </citation>
    <scope>DISRUPTION PHENOTYPE</scope>
    <source>
        <strain>CFT073 / ATCC 700928 / UPEC</strain>
    </source>
</reference>
<keyword id="KW-0067">ATP-binding</keyword>
<keyword id="KW-0418">Kinase</keyword>
<keyword id="KW-0547">Nucleotide-binding</keyword>
<keyword id="KW-0597">Phosphoprotein</keyword>
<keyword id="KW-1185">Reference proteome</keyword>
<keyword id="KW-0678">Repressor</keyword>
<keyword id="KW-0723">Serine/threonine-protein kinase</keyword>
<keyword id="KW-1277">Toxin-antitoxin system</keyword>
<keyword id="KW-0808">Transferase</keyword>
<name>HIPA_ECOL6</name>
<proteinExistence type="inferred from homology"/>
<evidence type="ECO:0000250" key="1">
    <source>
        <dbReference type="UniProtKB" id="P23874"/>
    </source>
</evidence>
<evidence type="ECO:0000269" key="2">
    <source>
    </source>
</evidence>
<evidence type="ECO:0000305" key="3"/>
<dbReference type="EC" id="2.7.11.1"/>
<dbReference type="EMBL" id="AE014075">
    <property type="protein sequence ID" value="AAN80398.1"/>
    <property type="status" value="ALT_SEQ"/>
    <property type="molecule type" value="Genomic_DNA"/>
</dbReference>
<dbReference type="STRING" id="199310.c1940"/>
<dbReference type="KEGG" id="ecc:c1940"/>
<dbReference type="eggNOG" id="COG3550">
    <property type="taxonomic scope" value="Bacteria"/>
</dbReference>
<dbReference type="HOGENOM" id="CLU_030167_2_1_6"/>
<dbReference type="BioCyc" id="ECOL199310:C1940-MONOMER"/>
<dbReference type="Proteomes" id="UP000001410">
    <property type="component" value="Chromosome"/>
</dbReference>
<dbReference type="GO" id="GO:0005829">
    <property type="term" value="C:cytosol"/>
    <property type="evidence" value="ECO:0007669"/>
    <property type="project" value="TreeGrafter"/>
</dbReference>
<dbReference type="GO" id="GO:0005524">
    <property type="term" value="F:ATP binding"/>
    <property type="evidence" value="ECO:0007669"/>
    <property type="project" value="UniProtKB-KW"/>
</dbReference>
<dbReference type="GO" id="GO:0106310">
    <property type="term" value="F:protein serine kinase activity"/>
    <property type="evidence" value="ECO:0007669"/>
    <property type="project" value="RHEA"/>
</dbReference>
<dbReference type="GO" id="GO:0004674">
    <property type="term" value="F:protein serine/threonine kinase activity"/>
    <property type="evidence" value="ECO:0007669"/>
    <property type="project" value="UniProtKB-KW"/>
</dbReference>
<dbReference type="CDD" id="cd17808">
    <property type="entry name" value="HipA_Ec_like"/>
    <property type="match status" value="1"/>
</dbReference>
<dbReference type="Gene3D" id="1.10.1070.20">
    <property type="match status" value="1"/>
</dbReference>
<dbReference type="InterPro" id="IPR012893">
    <property type="entry name" value="HipA-like_C"/>
</dbReference>
<dbReference type="InterPro" id="IPR017508">
    <property type="entry name" value="HipA_N1"/>
</dbReference>
<dbReference type="InterPro" id="IPR052028">
    <property type="entry name" value="HipA_Ser/Thr_kinase"/>
</dbReference>
<dbReference type="NCBIfam" id="TIGR03071">
    <property type="entry name" value="couple_hipA"/>
    <property type="match status" value="1"/>
</dbReference>
<dbReference type="PANTHER" id="PTHR37419">
    <property type="entry name" value="SERINE/THREONINE-PROTEIN KINASE TOXIN HIPA"/>
    <property type="match status" value="1"/>
</dbReference>
<dbReference type="PANTHER" id="PTHR37419:SF1">
    <property type="entry name" value="SERINE_THREONINE-PROTEIN KINASE TOXIN HIPA"/>
    <property type="match status" value="1"/>
</dbReference>
<dbReference type="Pfam" id="PF13657">
    <property type="entry name" value="Couple_hipA"/>
    <property type="match status" value="1"/>
</dbReference>
<dbReference type="Pfam" id="PF07804">
    <property type="entry name" value="HipA_C"/>
    <property type="match status" value="1"/>
</dbReference>
<feature type="chain" id="PRO_0000420796" description="Serine/threonine-protein kinase toxin HipA">
    <location>
        <begin position="1"/>
        <end position="440"/>
    </location>
</feature>
<feature type="active site" description="Proton acceptor" evidence="1">
    <location>
        <position position="309"/>
    </location>
</feature>
<feature type="binding site" evidence="1">
    <location>
        <begin position="152"/>
        <end position="157"/>
    </location>
    <ligand>
        <name>ATP</name>
        <dbReference type="ChEBI" id="CHEBI:30616"/>
    </ligand>
</feature>
<feature type="binding site" evidence="1">
    <location>
        <position position="181"/>
    </location>
    <ligand>
        <name>ATP</name>
        <dbReference type="ChEBI" id="CHEBI:30616"/>
    </ligand>
</feature>
<feature type="binding site" evidence="1">
    <location>
        <begin position="234"/>
        <end position="236"/>
    </location>
    <ligand>
        <name>ATP</name>
        <dbReference type="ChEBI" id="CHEBI:30616"/>
    </ligand>
</feature>
<feature type="binding site" evidence="1">
    <location>
        <begin position="311"/>
        <end position="314"/>
    </location>
    <ligand>
        <name>ATP</name>
        <dbReference type="ChEBI" id="CHEBI:30616"/>
    </ligand>
</feature>
<feature type="binding site" evidence="1">
    <location>
        <begin position="331"/>
        <end position="332"/>
    </location>
    <ligand>
        <name>ATP</name>
        <dbReference type="ChEBI" id="CHEBI:30616"/>
    </ligand>
</feature>
<feature type="modified residue" description="Phosphoserine; by autocatalysis" evidence="1">
    <location>
        <position position="150"/>
    </location>
</feature>
<gene>
    <name type="primary">hipA</name>
    <name type="ordered locus">c1940</name>
</gene>
<organism>
    <name type="scientific">Escherichia coli O6:H1 (strain CFT073 / ATCC 700928 / UPEC)</name>
    <dbReference type="NCBI Taxonomy" id="199310"/>
    <lineage>
        <taxon>Bacteria</taxon>
        <taxon>Pseudomonadati</taxon>
        <taxon>Pseudomonadota</taxon>
        <taxon>Gammaproteobacteria</taxon>
        <taxon>Enterobacterales</taxon>
        <taxon>Enterobacteriaceae</taxon>
        <taxon>Escherichia</taxon>
    </lineage>
</organism>
<protein>
    <recommendedName>
        <fullName>Serine/threonine-protein kinase toxin HipA</fullName>
        <shortName>Ser/Thr-protein kinase HipA</shortName>
        <ecNumber>2.7.11.1</ecNumber>
    </recommendedName>
    <alternativeName>
        <fullName>Toxin HipA</fullName>
    </alternativeName>
</protein>
<comment type="function">
    <text evidence="1">Toxic component of a type II toxin-antitoxin (TA) system. Phosphorylates Glu-tRNA-ligase (GltX, on 'Ser-239') in vivo. Phosphorylation of GltX prevents it from being charged, leading to an increase in uncharged tRNA(Glu). This induces amino acid starvation and the stringent response via RelA/SpoT and increased ppGpp levels, which inhibits replication, transcription, translation and cell wall synthesis, reducing growth and leading to multidrug resistance and persistence. Low level expression of HipA induces dormancy and depending on the protein level, can be toxic enough to reduce cell growth or even kill cells. Low levels of wild-type HipA lead to high beta-lactam antibiotic tolerance of the survivor cells, also dependent on relA and relA/spoT. The toxic effect of HipA is neutralized by its cognate antitoxin HipB. With HipB acts as a corepressor for transcription of the hipBA promoter; binding to DNA induces a 70 degree bend (By similarity).</text>
</comment>
<comment type="catalytic activity">
    <reaction>
        <text>L-seryl-[protein] + ATP = O-phospho-L-seryl-[protein] + ADP + H(+)</text>
        <dbReference type="Rhea" id="RHEA:17989"/>
        <dbReference type="Rhea" id="RHEA-COMP:9863"/>
        <dbReference type="Rhea" id="RHEA-COMP:11604"/>
        <dbReference type="ChEBI" id="CHEBI:15378"/>
        <dbReference type="ChEBI" id="CHEBI:29999"/>
        <dbReference type="ChEBI" id="CHEBI:30616"/>
        <dbReference type="ChEBI" id="CHEBI:83421"/>
        <dbReference type="ChEBI" id="CHEBI:456216"/>
        <dbReference type="EC" id="2.7.11.1"/>
    </reaction>
</comment>
<comment type="catalytic activity">
    <reaction>
        <text>L-threonyl-[protein] + ATP = O-phospho-L-threonyl-[protein] + ADP + H(+)</text>
        <dbReference type="Rhea" id="RHEA:46608"/>
        <dbReference type="Rhea" id="RHEA-COMP:11060"/>
        <dbReference type="Rhea" id="RHEA-COMP:11605"/>
        <dbReference type="ChEBI" id="CHEBI:15378"/>
        <dbReference type="ChEBI" id="CHEBI:30013"/>
        <dbReference type="ChEBI" id="CHEBI:30616"/>
        <dbReference type="ChEBI" id="CHEBI:61977"/>
        <dbReference type="ChEBI" id="CHEBI:456216"/>
        <dbReference type="EC" id="2.7.11.1"/>
    </reaction>
</comment>
<comment type="subunit">
    <text evidence="1">Forms a HipA(2)HipB(2) heterotetramer which can interact with DNA.</text>
</comment>
<comment type="PTM">
    <text evidence="1">Autophosphorylates intermolecularly on Ser-150; phosphorylated form not seen to bind ATP and no longer has kinase activity.</text>
</comment>
<comment type="disruption phenotype">
    <text evidence="2">Deletion of the hipB-hipA operon has no effect on virulence in mouse infection; the disrupted strain is as virulent as wild-type.</text>
</comment>
<comment type="similarity">
    <text evidence="3">Belongs to the HipA Ser/Thr kinase family.</text>
</comment>
<comment type="sequence caution" evidence="3">
    <conflict type="erroneous initiation">
        <sequence resource="EMBL-CDS" id="AAN80398"/>
    </conflict>
    <text>Extended N-terminus.</text>
</comment>
<comment type="sequence caution" evidence="3">
    <conflict type="frameshift">
        <sequence resource="EMBL-CDS" id="AAN80398"/>
    </conflict>
</comment>
<sequence>MPKLVTWMNNQRVGELTKLANGAHTFKYAPEWLASRYARPLSLSLPLQRGNITSDAVFNFFDNLLPDSPIVRDRIVKRYHAKSRQPFDLLSEIGRDSVGAVTLIPEDETVTCPIMAWEKLTEARLEEVLTAYKADIPLGMIREENDFRISVAGAQEKTALLRIGNDWCIPKGITPTTHIIKLPIGEIRQPNATLDLSQSVDNEYYCLLLAKELGLNVPDAEIIKAGRVRALAVKRFDRRWNTERTVLLRLPQEDMCQTFGLPSSVKYESDGGPGIAQIMAFLMGSSEALKDRYDFMKFQVFQWLIGATDGHAKNFSVFIQAGGSYRLTPFYDIISAFPVLGGTGIHISDLKLAMGLNASKGKKTAIDKXYPRHFXATAKVLKFPEVXMHEILXDFARMIPAALDNVKNSLPXDFPEXVVTAVETNVLRLHGRLSPEYXXK</sequence>